<evidence type="ECO:0000255" key="1">
    <source>
        <dbReference type="HAMAP-Rule" id="MF_00184"/>
    </source>
</evidence>
<evidence type="ECO:0000255" key="2">
    <source>
        <dbReference type="PROSITE-ProRule" id="PRU01228"/>
    </source>
</evidence>
<proteinExistence type="inferred from homology"/>
<reference key="1">
    <citation type="journal article" date="2007" name="Genes Dev.">
        <title>New insights into Acinetobacter baumannii pathogenesis revealed by high-density pyrosequencing and transposon mutagenesis.</title>
        <authorList>
            <person name="Smith M.G."/>
            <person name="Gianoulis T.A."/>
            <person name="Pukatzki S."/>
            <person name="Mekalanos J.J."/>
            <person name="Ornston L.N."/>
            <person name="Gerstein M."/>
            <person name="Snyder M."/>
        </authorList>
    </citation>
    <scope>NUCLEOTIDE SEQUENCE [LARGE SCALE GENOMIC DNA]</scope>
    <source>
        <strain>ATCC 17978 / DSM 105126 / CIP 53.77 / LMG 1025 / NCDC KC755 / 5377</strain>
    </source>
</reference>
<feature type="chain" id="PRO_1000098535" description="Threonine--tRNA ligase">
    <location>
        <begin position="1"/>
        <end position="640"/>
    </location>
</feature>
<feature type="domain" description="TGS" evidence="2">
    <location>
        <begin position="1"/>
        <end position="61"/>
    </location>
</feature>
<feature type="region of interest" description="Catalytic" evidence="1">
    <location>
        <begin position="242"/>
        <end position="533"/>
    </location>
</feature>
<feature type="binding site" evidence="1">
    <location>
        <position position="333"/>
    </location>
    <ligand>
        <name>Zn(2+)</name>
        <dbReference type="ChEBI" id="CHEBI:29105"/>
    </ligand>
</feature>
<feature type="binding site" evidence="1">
    <location>
        <position position="384"/>
    </location>
    <ligand>
        <name>Zn(2+)</name>
        <dbReference type="ChEBI" id="CHEBI:29105"/>
    </ligand>
</feature>
<feature type="binding site" evidence="1">
    <location>
        <position position="510"/>
    </location>
    <ligand>
        <name>Zn(2+)</name>
        <dbReference type="ChEBI" id="CHEBI:29105"/>
    </ligand>
</feature>
<keyword id="KW-0030">Aminoacyl-tRNA synthetase</keyword>
<keyword id="KW-0067">ATP-binding</keyword>
<keyword id="KW-0963">Cytoplasm</keyword>
<keyword id="KW-0436">Ligase</keyword>
<keyword id="KW-0479">Metal-binding</keyword>
<keyword id="KW-0547">Nucleotide-binding</keyword>
<keyword id="KW-0648">Protein biosynthesis</keyword>
<keyword id="KW-0694">RNA-binding</keyword>
<keyword id="KW-0820">tRNA-binding</keyword>
<keyword id="KW-0862">Zinc</keyword>
<sequence length="640" mass="73151">MPIITLPNGDQKSFDHPVSVMEVAQSIGPGLAKNTVAGRVNDRLVDACDLITEDSTLQIITPKDEEGLEIIRHSCAHLVGHAVKQLFPEAKMVIGPVIEEGFYYDIWMPRPFTLDDMAAIEERMKKLIDQDYDVIKKMTPRDEVIKVFTDRGEEYKLRLVEDMPEEKAMGLYYHQEYVDMCRGPHVPNTKFLKSFKLTKISGAYWRGDAKNEQLQRIYGTAWADKKQLAAYIKRIEEAEKRDHRKIGKALDLFHMQEEAPGMVFWHANGWTIYQVLEQYMRKVQQDNGYQEIKTPQIVDFTLWEKSGHAANYAENMFTTHSESRNYAVKPMNCPCHVQVFNQGLKSYRDLPIRLAEFGSCHRNEPSGSLHGIMRVRGFTQDDAHIFCTKEQIGKEVADFIKLTLDVYKDFGFEEVQMKLSTRPEKRVGDDALWDLAEKSLADALDAAGLEWELQPGEGAFYGPKIEFSLKDCLGRVWQCGTIQCDFNLPVRLDASYVTEENERDQPVMLHRAILGSFERFIGILIEHYAGFMPPWLSPVQACVMNITDSQAEASEQVVAKLKENGLRAISDLRNEKIGFKIRERTLERIPYLLVLGDREVEEGTVNVRTRSGKNLGTMSVDAFIDLVKSAVAERGRYIVE</sequence>
<protein>
    <recommendedName>
        <fullName evidence="1">Threonine--tRNA ligase</fullName>
        <ecNumber evidence="1">6.1.1.3</ecNumber>
    </recommendedName>
    <alternativeName>
        <fullName evidence="1">Threonyl-tRNA synthetase</fullName>
        <shortName evidence="1">ThrRS</shortName>
    </alternativeName>
</protein>
<accession>A3M299</accession>
<comment type="function">
    <text evidence="1">Catalyzes the attachment of threonine to tRNA(Thr) in a two-step reaction: L-threonine is first activated by ATP to form Thr-AMP and then transferred to the acceptor end of tRNA(Thr). Also edits incorrectly charged L-seryl-tRNA(Thr).</text>
</comment>
<comment type="catalytic activity">
    <reaction evidence="1">
        <text>tRNA(Thr) + L-threonine + ATP = L-threonyl-tRNA(Thr) + AMP + diphosphate + H(+)</text>
        <dbReference type="Rhea" id="RHEA:24624"/>
        <dbReference type="Rhea" id="RHEA-COMP:9670"/>
        <dbReference type="Rhea" id="RHEA-COMP:9704"/>
        <dbReference type="ChEBI" id="CHEBI:15378"/>
        <dbReference type="ChEBI" id="CHEBI:30616"/>
        <dbReference type="ChEBI" id="CHEBI:33019"/>
        <dbReference type="ChEBI" id="CHEBI:57926"/>
        <dbReference type="ChEBI" id="CHEBI:78442"/>
        <dbReference type="ChEBI" id="CHEBI:78534"/>
        <dbReference type="ChEBI" id="CHEBI:456215"/>
        <dbReference type="EC" id="6.1.1.3"/>
    </reaction>
</comment>
<comment type="cofactor">
    <cofactor evidence="1">
        <name>Zn(2+)</name>
        <dbReference type="ChEBI" id="CHEBI:29105"/>
    </cofactor>
    <text evidence="1">Binds 1 zinc ion per subunit.</text>
</comment>
<comment type="subunit">
    <text evidence="1">Homodimer.</text>
</comment>
<comment type="subcellular location">
    <subcellularLocation>
        <location evidence="1">Cytoplasm</location>
    </subcellularLocation>
</comment>
<comment type="similarity">
    <text evidence="1">Belongs to the class-II aminoacyl-tRNA synthetase family.</text>
</comment>
<organism>
    <name type="scientific">Acinetobacter baumannii (strain ATCC 17978 / DSM 105126 / CIP 53.77 / LMG 1025 / NCDC KC755 / 5377)</name>
    <dbReference type="NCBI Taxonomy" id="400667"/>
    <lineage>
        <taxon>Bacteria</taxon>
        <taxon>Pseudomonadati</taxon>
        <taxon>Pseudomonadota</taxon>
        <taxon>Gammaproteobacteria</taxon>
        <taxon>Moraxellales</taxon>
        <taxon>Moraxellaceae</taxon>
        <taxon>Acinetobacter</taxon>
        <taxon>Acinetobacter calcoaceticus/baumannii complex</taxon>
    </lineage>
</organism>
<name>SYT_ACIBT</name>
<gene>
    <name evidence="1" type="primary">thrS</name>
    <name type="ordered locus">A1S_0592</name>
</gene>
<dbReference type="EC" id="6.1.1.3" evidence="1"/>
<dbReference type="EMBL" id="CP000521">
    <property type="protein sequence ID" value="ABO11043.2"/>
    <property type="molecule type" value="Genomic_DNA"/>
</dbReference>
<dbReference type="RefSeq" id="WP_001121792.1">
    <property type="nucleotide sequence ID" value="NZ_CP053098.1"/>
</dbReference>
<dbReference type="SMR" id="A3M299"/>
<dbReference type="KEGG" id="acb:A1S_0592"/>
<dbReference type="HOGENOM" id="CLU_008554_0_1_6"/>
<dbReference type="GO" id="GO:0005829">
    <property type="term" value="C:cytosol"/>
    <property type="evidence" value="ECO:0007669"/>
    <property type="project" value="TreeGrafter"/>
</dbReference>
<dbReference type="GO" id="GO:0005524">
    <property type="term" value="F:ATP binding"/>
    <property type="evidence" value="ECO:0007669"/>
    <property type="project" value="UniProtKB-UniRule"/>
</dbReference>
<dbReference type="GO" id="GO:0046872">
    <property type="term" value="F:metal ion binding"/>
    <property type="evidence" value="ECO:0007669"/>
    <property type="project" value="UniProtKB-KW"/>
</dbReference>
<dbReference type="GO" id="GO:0004829">
    <property type="term" value="F:threonine-tRNA ligase activity"/>
    <property type="evidence" value="ECO:0007669"/>
    <property type="project" value="UniProtKB-UniRule"/>
</dbReference>
<dbReference type="GO" id="GO:0000049">
    <property type="term" value="F:tRNA binding"/>
    <property type="evidence" value="ECO:0007669"/>
    <property type="project" value="UniProtKB-KW"/>
</dbReference>
<dbReference type="GO" id="GO:0006435">
    <property type="term" value="P:threonyl-tRNA aminoacylation"/>
    <property type="evidence" value="ECO:0007669"/>
    <property type="project" value="UniProtKB-UniRule"/>
</dbReference>
<dbReference type="CDD" id="cd01667">
    <property type="entry name" value="TGS_ThrRS"/>
    <property type="match status" value="1"/>
</dbReference>
<dbReference type="CDD" id="cd00860">
    <property type="entry name" value="ThrRS_anticodon"/>
    <property type="match status" value="1"/>
</dbReference>
<dbReference type="CDD" id="cd00771">
    <property type="entry name" value="ThrRS_core"/>
    <property type="match status" value="1"/>
</dbReference>
<dbReference type="FunFam" id="3.10.20.30:FF:000005">
    <property type="entry name" value="Threonine--tRNA ligase"/>
    <property type="match status" value="1"/>
</dbReference>
<dbReference type="FunFam" id="3.30.54.20:FF:000002">
    <property type="entry name" value="Threonine--tRNA ligase"/>
    <property type="match status" value="1"/>
</dbReference>
<dbReference type="FunFam" id="3.30.930.10:FF:000002">
    <property type="entry name" value="Threonine--tRNA ligase"/>
    <property type="match status" value="1"/>
</dbReference>
<dbReference type="FunFam" id="3.40.50.800:FF:000001">
    <property type="entry name" value="Threonine--tRNA ligase"/>
    <property type="match status" value="1"/>
</dbReference>
<dbReference type="FunFam" id="3.30.980.10:FF:000005">
    <property type="entry name" value="Threonyl-tRNA synthetase, mitochondrial"/>
    <property type="match status" value="1"/>
</dbReference>
<dbReference type="Gene3D" id="3.10.20.30">
    <property type="match status" value="1"/>
</dbReference>
<dbReference type="Gene3D" id="3.30.54.20">
    <property type="match status" value="1"/>
</dbReference>
<dbReference type="Gene3D" id="3.40.50.800">
    <property type="entry name" value="Anticodon-binding domain"/>
    <property type="match status" value="1"/>
</dbReference>
<dbReference type="Gene3D" id="3.30.930.10">
    <property type="entry name" value="Bira Bifunctional Protein, Domain 2"/>
    <property type="match status" value="1"/>
</dbReference>
<dbReference type="Gene3D" id="3.30.980.10">
    <property type="entry name" value="Threonyl-trna Synthetase, Chain A, domain 2"/>
    <property type="match status" value="1"/>
</dbReference>
<dbReference type="HAMAP" id="MF_00184">
    <property type="entry name" value="Thr_tRNA_synth"/>
    <property type="match status" value="1"/>
</dbReference>
<dbReference type="InterPro" id="IPR002314">
    <property type="entry name" value="aa-tRNA-synt_IIb"/>
</dbReference>
<dbReference type="InterPro" id="IPR006195">
    <property type="entry name" value="aa-tRNA-synth_II"/>
</dbReference>
<dbReference type="InterPro" id="IPR045864">
    <property type="entry name" value="aa-tRNA-synth_II/BPL/LPL"/>
</dbReference>
<dbReference type="InterPro" id="IPR004154">
    <property type="entry name" value="Anticodon-bd"/>
</dbReference>
<dbReference type="InterPro" id="IPR036621">
    <property type="entry name" value="Anticodon-bd_dom_sf"/>
</dbReference>
<dbReference type="InterPro" id="IPR012675">
    <property type="entry name" value="Beta-grasp_dom_sf"/>
</dbReference>
<dbReference type="InterPro" id="IPR004095">
    <property type="entry name" value="TGS"/>
</dbReference>
<dbReference type="InterPro" id="IPR012676">
    <property type="entry name" value="TGS-like"/>
</dbReference>
<dbReference type="InterPro" id="IPR002320">
    <property type="entry name" value="Thr-tRNA-ligase_IIa"/>
</dbReference>
<dbReference type="InterPro" id="IPR018163">
    <property type="entry name" value="Thr/Ala-tRNA-synth_IIc_edit"/>
</dbReference>
<dbReference type="InterPro" id="IPR047246">
    <property type="entry name" value="ThrRS_anticodon"/>
</dbReference>
<dbReference type="InterPro" id="IPR033728">
    <property type="entry name" value="ThrRS_core"/>
</dbReference>
<dbReference type="InterPro" id="IPR012947">
    <property type="entry name" value="tRNA_SAD"/>
</dbReference>
<dbReference type="NCBIfam" id="TIGR00418">
    <property type="entry name" value="thrS"/>
    <property type="match status" value="1"/>
</dbReference>
<dbReference type="PANTHER" id="PTHR11451:SF44">
    <property type="entry name" value="THREONINE--TRNA LIGASE, CHLOROPLASTIC_MITOCHONDRIAL 2"/>
    <property type="match status" value="1"/>
</dbReference>
<dbReference type="PANTHER" id="PTHR11451">
    <property type="entry name" value="THREONINE-TRNA LIGASE"/>
    <property type="match status" value="1"/>
</dbReference>
<dbReference type="Pfam" id="PF03129">
    <property type="entry name" value="HGTP_anticodon"/>
    <property type="match status" value="1"/>
</dbReference>
<dbReference type="Pfam" id="PF02824">
    <property type="entry name" value="TGS"/>
    <property type="match status" value="1"/>
</dbReference>
<dbReference type="Pfam" id="PF00587">
    <property type="entry name" value="tRNA-synt_2b"/>
    <property type="match status" value="1"/>
</dbReference>
<dbReference type="Pfam" id="PF07973">
    <property type="entry name" value="tRNA_SAD"/>
    <property type="match status" value="1"/>
</dbReference>
<dbReference type="PRINTS" id="PR01047">
    <property type="entry name" value="TRNASYNTHTHR"/>
</dbReference>
<dbReference type="SMART" id="SM00863">
    <property type="entry name" value="tRNA_SAD"/>
    <property type="match status" value="1"/>
</dbReference>
<dbReference type="SUPFAM" id="SSF52954">
    <property type="entry name" value="Class II aaRS ABD-related"/>
    <property type="match status" value="1"/>
</dbReference>
<dbReference type="SUPFAM" id="SSF55681">
    <property type="entry name" value="Class II aaRS and biotin synthetases"/>
    <property type="match status" value="1"/>
</dbReference>
<dbReference type="SUPFAM" id="SSF81271">
    <property type="entry name" value="TGS-like"/>
    <property type="match status" value="1"/>
</dbReference>
<dbReference type="SUPFAM" id="SSF55186">
    <property type="entry name" value="ThrRS/AlaRS common domain"/>
    <property type="match status" value="1"/>
</dbReference>
<dbReference type="PROSITE" id="PS50862">
    <property type="entry name" value="AA_TRNA_LIGASE_II"/>
    <property type="match status" value="1"/>
</dbReference>
<dbReference type="PROSITE" id="PS51880">
    <property type="entry name" value="TGS"/>
    <property type="match status" value="1"/>
</dbReference>